<protein>
    <recommendedName>
        <fullName evidence="1">Putative ion-transport protein YfeO</fullName>
    </recommendedName>
</protein>
<accession>A8A2P3</accession>
<dbReference type="EMBL" id="CP000802">
    <property type="protein sequence ID" value="ABV06797.1"/>
    <property type="molecule type" value="Genomic_DNA"/>
</dbReference>
<dbReference type="RefSeq" id="WP_000903149.1">
    <property type="nucleotide sequence ID" value="NC_009800.1"/>
</dbReference>
<dbReference type="SMR" id="A8A2P3"/>
<dbReference type="KEGG" id="ecx:EcHS_A2526"/>
<dbReference type="HOGENOM" id="CLU_053130_0_0_6"/>
<dbReference type="GO" id="GO:0005886">
    <property type="term" value="C:plasma membrane"/>
    <property type="evidence" value="ECO:0007669"/>
    <property type="project" value="UniProtKB-SubCell"/>
</dbReference>
<dbReference type="GO" id="GO:0015108">
    <property type="term" value="F:chloride transmembrane transporter activity"/>
    <property type="evidence" value="ECO:0007669"/>
    <property type="project" value="InterPro"/>
</dbReference>
<dbReference type="GO" id="GO:0005216">
    <property type="term" value="F:monoatomic ion channel activity"/>
    <property type="evidence" value="ECO:0007669"/>
    <property type="project" value="UniProtKB-UniRule"/>
</dbReference>
<dbReference type="CDD" id="cd00400">
    <property type="entry name" value="Voltage_gated_ClC"/>
    <property type="match status" value="1"/>
</dbReference>
<dbReference type="FunFam" id="1.10.3080.10:FF:000007">
    <property type="entry name" value="Putative ion-transport protein YfeO"/>
    <property type="match status" value="1"/>
</dbReference>
<dbReference type="Gene3D" id="1.10.3080.10">
    <property type="entry name" value="Clc chloride channel"/>
    <property type="match status" value="1"/>
</dbReference>
<dbReference type="HAMAP" id="MF_01115">
    <property type="entry name" value="CLC_YfeO"/>
    <property type="match status" value="1"/>
</dbReference>
<dbReference type="InterPro" id="IPR022969">
    <property type="entry name" value="Chloride_channel_YfeO"/>
</dbReference>
<dbReference type="InterPro" id="IPR014743">
    <property type="entry name" value="Cl-channel_core"/>
</dbReference>
<dbReference type="InterPro" id="IPR001807">
    <property type="entry name" value="ClC"/>
</dbReference>
<dbReference type="InterPro" id="IPR050368">
    <property type="entry name" value="ClC-type_chloride_channel"/>
</dbReference>
<dbReference type="NCBIfam" id="NF002971">
    <property type="entry name" value="PRK03655.1"/>
    <property type="match status" value="1"/>
</dbReference>
<dbReference type="PANTHER" id="PTHR43427">
    <property type="entry name" value="CHLORIDE CHANNEL PROTEIN CLC-E"/>
    <property type="match status" value="1"/>
</dbReference>
<dbReference type="PANTHER" id="PTHR43427:SF9">
    <property type="entry name" value="ION-TRANSPORT PROTEIN YFEO-RELATED"/>
    <property type="match status" value="1"/>
</dbReference>
<dbReference type="Pfam" id="PF00654">
    <property type="entry name" value="Voltage_CLC"/>
    <property type="match status" value="1"/>
</dbReference>
<dbReference type="PRINTS" id="PR00762">
    <property type="entry name" value="CLCHANNEL"/>
</dbReference>
<dbReference type="SUPFAM" id="SSF81340">
    <property type="entry name" value="Clc chloride channel"/>
    <property type="match status" value="1"/>
</dbReference>
<name>YFEO_ECOHS</name>
<reference key="1">
    <citation type="journal article" date="2008" name="J. Bacteriol.">
        <title>The pangenome structure of Escherichia coli: comparative genomic analysis of E. coli commensal and pathogenic isolates.</title>
        <authorList>
            <person name="Rasko D.A."/>
            <person name="Rosovitz M.J."/>
            <person name="Myers G.S.A."/>
            <person name="Mongodin E.F."/>
            <person name="Fricke W.F."/>
            <person name="Gajer P."/>
            <person name="Crabtree J."/>
            <person name="Sebaihia M."/>
            <person name="Thomson N.R."/>
            <person name="Chaudhuri R."/>
            <person name="Henderson I.R."/>
            <person name="Sperandio V."/>
            <person name="Ravel J."/>
        </authorList>
    </citation>
    <scope>NUCLEOTIDE SEQUENCE [LARGE SCALE GENOMIC DNA]</scope>
    <source>
        <strain>HS</strain>
    </source>
</reference>
<sequence>MLHPRARTMLLLSLPAVAIGIASSLILIVVMKIASVLQNLLWQRLPGTLGIAQDSPLWIIGVLTLTGIAVGLVIRFSQGHAGPDPACEPLIGAPVPPSALPGLIVALILGLAGGVSLGPEHPIMTVNIALAVAIGARLLPRVNRMEWTILASAGTIGALFGTPVAAALIFSQTLNGSSEVPLWDRLFAPLMAAAAGALTTGLFFHPHFSLPIAHYGQMEMTDILSGAIVAAIAIAAGMVAVWCLPRLHAMMHQMKNPVLVLGIGGFILGILGVIGGPVSLFKGLDEMQQMVANQAFSTSDYFLLAVIKLAALVVAAASGFRGGRIFPAVFVGVALGLMLHEHVPAVPAAITVSCAILGIVLVVTRDGWLSLFMAAVVVPNTTLLPLLCIVMLPAWLLLAGKPMMMVNRSKQQPPHDNV</sequence>
<comment type="subcellular location">
    <subcellularLocation>
        <location evidence="1">Cell membrane</location>
        <topology evidence="1">Multi-pass membrane protein</topology>
    </subcellularLocation>
</comment>
<comment type="similarity">
    <text evidence="1">Belongs to the chloride channel (TC 2.A.49) family.</text>
</comment>
<feature type="chain" id="PRO_1000065238" description="Putative ion-transport protein YfeO">
    <location>
        <begin position="1"/>
        <end position="418"/>
    </location>
</feature>
<feature type="transmembrane region" description="Helical" evidence="1">
    <location>
        <begin position="10"/>
        <end position="30"/>
    </location>
</feature>
<feature type="transmembrane region" description="Helical" evidence="1">
    <location>
        <begin position="54"/>
        <end position="74"/>
    </location>
</feature>
<feature type="transmembrane region" description="Helical" evidence="1">
    <location>
        <begin position="99"/>
        <end position="119"/>
    </location>
</feature>
<feature type="transmembrane region" description="Helical" evidence="1">
    <location>
        <begin position="120"/>
        <end position="140"/>
    </location>
</feature>
<feature type="transmembrane region" description="Helical" evidence="1">
    <location>
        <begin position="149"/>
        <end position="169"/>
    </location>
</feature>
<feature type="transmembrane region" description="Helical" evidence="1">
    <location>
        <begin position="186"/>
        <end position="206"/>
    </location>
</feature>
<feature type="transmembrane region" description="Helical" evidence="1">
    <location>
        <begin position="223"/>
        <end position="243"/>
    </location>
</feature>
<feature type="transmembrane region" description="Helical" evidence="1">
    <location>
        <begin position="258"/>
        <end position="278"/>
    </location>
</feature>
<feature type="transmembrane region" description="Helical" evidence="1">
    <location>
        <begin position="300"/>
        <end position="320"/>
    </location>
</feature>
<feature type="transmembrane region" description="Helical" evidence="1">
    <location>
        <begin position="322"/>
        <end position="342"/>
    </location>
</feature>
<feature type="transmembrane region" description="Helical" evidence="1">
    <location>
        <begin position="343"/>
        <end position="363"/>
    </location>
</feature>
<feature type="transmembrane region" description="Helical" evidence="1">
    <location>
        <begin position="371"/>
        <end position="391"/>
    </location>
</feature>
<gene>
    <name evidence="1" type="primary">yfeO</name>
    <name type="ordered locus">EcHS_A2526</name>
</gene>
<keyword id="KW-1003">Cell membrane</keyword>
<keyword id="KW-0407">Ion channel</keyword>
<keyword id="KW-0406">Ion transport</keyword>
<keyword id="KW-0472">Membrane</keyword>
<keyword id="KW-0812">Transmembrane</keyword>
<keyword id="KW-1133">Transmembrane helix</keyword>
<keyword id="KW-0813">Transport</keyword>
<evidence type="ECO:0000255" key="1">
    <source>
        <dbReference type="HAMAP-Rule" id="MF_01115"/>
    </source>
</evidence>
<proteinExistence type="inferred from homology"/>
<organism>
    <name type="scientific">Escherichia coli O9:H4 (strain HS)</name>
    <dbReference type="NCBI Taxonomy" id="331112"/>
    <lineage>
        <taxon>Bacteria</taxon>
        <taxon>Pseudomonadati</taxon>
        <taxon>Pseudomonadota</taxon>
        <taxon>Gammaproteobacteria</taxon>
        <taxon>Enterobacterales</taxon>
        <taxon>Enterobacteriaceae</taxon>
        <taxon>Escherichia</taxon>
    </lineage>
</organism>